<feature type="chain" id="PRO_1000190083" description="Glycogen synthase">
    <location>
        <begin position="1"/>
        <end position="476"/>
    </location>
</feature>
<feature type="binding site" evidence="1">
    <location>
        <position position="15"/>
    </location>
    <ligand>
        <name>ADP-alpha-D-glucose</name>
        <dbReference type="ChEBI" id="CHEBI:57498"/>
    </ligand>
</feature>
<organism>
    <name type="scientific">Streptococcus equi subsp. equi (strain 4047)</name>
    <dbReference type="NCBI Taxonomy" id="553482"/>
    <lineage>
        <taxon>Bacteria</taxon>
        <taxon>Bacillati</taxon>
        <taxon>Bacillota</taxon>
        <taxon>Bacilli</taxon>
        <taxon>Lactobacillales</taxon>
        <taxon>Streptococcaceae</taxon>
        <taxon>Streptococcus</taxon>
    </lineage>
</organism>
<evidence type="ECO:0000255" key="1">
    <source>
        <dbReference type="HAMAP-Rule" id="MF_00484"/>
    </source>
</evidence>
<comment type="function">
    <text evidence="1">Synthesizes alpha-1,4-glucan chains using ADP-glucose.</text>
</comment>
<comment type="catalytic activity">
    <reaction evidence="1">
        <text>[(1-&gt;4)-alpha-D-glucosyl](n) + ADP-alpha-D-glucose = [(1-&gt;4)-alpha-D-glucosyl](n+1) + ADP + H(+)</text>
        <dbReference type="Rhea" id="RHEA:18189"/>
        <dbReference type="Rhea" id="RHEA-COMP:9584"/>
        <dbReference type="Rhea" id="RHEA-COMP:9587"/>
        <dbReference type="ChEBI" id="CHEBI:15378"/>
        <dbReference type="ChEBI" id="CHEBI:15444"/>
        <dbReference type="ChEBI" id="CHEBI:57498"/>
        <dbReference type="ChEBI" id="CHEBI:456216"/>
        <dbReference type="EC" id="2.4.1.21"/>
    </reaction>
</comment>
<comment type="pathway">
    <text evidence="1">Glycan biosynthesis; glycogen biosynthesis.</text>
</comment>
<comment type="similarity">
    <text evidence="1">Belongs to the glycosyltransferase 1 family. Bacterial/plant glycogen synthase subfamily.</text>
</comment>
<reference key="1">
    <citation type="journal article" date="2009" name="PLoS Pathog.">
        <title>Genomic evidence for the evolution of Streptococcus equi: host restriction, increased virulence, and genetic exchange with human pathogens.</title>
        <authorList>
            <person name="Holden M.T.G."/>
            <person name="Heather Z."/>
            <person name="Paillot R."/>
            <person name="Steward K.F."/>
            <person name="Webb K."/>
            <person name="Ainslie F."/>
            <person name="Jourdan T."/>
            <person name="Bason N.C."/>
            <person name="Holroyd N.E."/>
            <person name="Mungall K."/>
            <person name="Quail M.A."/>
            <person name="Sanders M."/>
            <person name="Simmonds M."/>
            <person name="Willey D."/>
            <person name="Brooks K."/>
            <person name="Aanensen D.M."/>
            <person name="Spratt B.G."/>
            <person name="Jolley K.A."/>
            <person name="Maiden M.C.J."/>
            <person name="Kehoe M."/>
            <person name="Chanter N."/>
            <person name="Bentley S.D."/>
            <person name="Robinson C."/>
            <person name="Maskell D.J."/>
            <person name="Parkhill J."/>
            <person name="Waller A.S."/>
        </authorList>
    </citation>
    <scope>NUCLEOTIDE SEQUENCE [LARGE SCALE GENOMIC DNA]</scope>
    <source>
        <strain>4047</strain>
    </source>
</reference>
<accession>C0M712</accession>
<keyword id="KW-0320">Glycogen biosynthesis</keyword>
<keyword id="KW-0328">Glycosyltransferase</keyword>
<keyword id="KW-0808">Transferase</keyword>
<sequence length="476" mass="53670">MKIMFVAAEGAPFAKTGGLGDVIGALPKSLVKNGHEVSVILPYYDVVDQAFGQQVEDVLYFYTQVGWRRQYVGIKKLVKDKVTFYFIDNQGYFFRGRIYGDWDDGERFAYFQLAAIEAMEKIGVIPDILHVHDYHTAMIPFLLKEKYHWIQAYQAIRTVFTIHNIAFQGQFDPGMLGDLFDVGIERYEDGTLRWHDCLNWMKAAVLYADRVTTVSPSYAHEIQTPAFGQGLDQVMRMEAGKLSGIVNGIDTDLFNPARDPHLPASFSAEDLSGKAATKQALQERLGLPVRADVPLIGMVSRLTDQKGFQLVLEELPHILQQDVQLVLLGTGDPDYEAAFSWFAKAYPEKLSANITFDLPLAQQIYGACDLFLMPSAFEPCGLSQMMAMRYGAIPIVHEIGGLKDTVASYNAYEKTGTGFGFDQFSGFWLTQTLLFALDIYHNHKEDWQTIQQHAMTKDFSWDTASLAYLDLYKSLL</sequence>
<protein>
    <recommendedName>
        <fullName evidence="1">Glycogen synthase</fullName>
        <ecNumber evidence="1">2.4.1.21</ecNumber>
    </recommendedName>
    <alternativeName>
        <fullName evidence="1">Starch [bacterial glycogen] synthase</fullName>
    </alternativeName>
</protein>
<gene>
    <name evidence="1" type="primary">glgA</name>
    <name type="ordered locus">SEQ_0913</name>
</gene>
<proteinExistence type="inferred from homology"/>
<dbReference type="EC" id="2.4.1.21" evidence="1"/>
<dbReference type="EMBL" id="FM204883">
    <property type="protein sequence ID" value="CAW93423.1"/>
    <property type="molecule type" value="Genomic_DNA"/>
</dbReference>
<dbReference type="RefSeq" id="WP_012679389.1">
    <property type="nucleotide sequence ID" value="NC_012471.1"/>
</dbReference>
<dbReference type="SMR" id="C0M712"/>
<dbReference type="CAZy" id="GT5">
    <property type="family name" value="Glycosyltransferase Family 5"/>
</dbReference>
<dbReference type="KEGG" id="seu:SEQ_0913"/>
<dbReference type="HOGENOM" id="CLU_009583_18_2_9"/>
<dbReference type="OrthoDB" id="9808590at2"/>
<dbReference type="UniPathway" id="UPA00164"/>
<dbReference type="Proteomes" id="UP000001365">
    <property type="component" value="Chromosome"/>
</dbReference>
<dbReference type="GO" id="GO:0009011">
    <property type="term" value="F:alpha-1,4-glucan glucosyltransferase (ADP-glucose donor) activity"/>
    <property type="evidence" value="ECO:0007669"/>
    <property type="project" value="UniProtKB-UniRule"/>
</dbReference>
<dbReference type="GO" id="GO:0004373">
    <property type="term" value="F:alpha-1,4-glucan glucosyltransferase (UDP-glucose donor) activity"/>
    <property type="evidence" value="ECO:0007669"/>
    <property type="project" value="InterPro"/>
</dbReference>
<dbReference type="GO" id="GO:0005978">
    <property type="term" value="P:glycogen biosynthetic process"/>
    <property type="evidence" value="ECO:0007669"/>
    <property type="project" value="UniProtKB-UniRule"/>
</dbReference>
<dbReference type="CDD" id="cd03791">
    <property type="entry name" value="GT5_Glycogen_synthase_DULL1-like"/>
    <property type="match status" value="1"/>
</dbReference>
<dbReference type="Gene3D" id="3.40.50.2000">
    <property type="entry name" value="Glycogen Phosphorylase B"/>
    <property type="match status" value="2"/>
</dbReference>
<dbReference type="HAMAP" id="MF_00484">
    <property type="entry name" value="Glycogen_synth"/>
    <property type="match status" value="1"/>
</dbReference>
<dbReference type="InterPro" id="IPR001296">
    <property type="entry name" value="Glyco_trans_1"/>
</dbReference>
<dbReference type="InterPro" id="IPR011835">
    <property type="entry name" value="GS/SS"/>
</dbReference>
<dbReference type="InterPro" id="IPR013534">
    <property type="entry name" value="Starch_synth_cat_dom"/>
</dbReference>
<dbReference type="NCBIfam" id="TIGR02095">
    <property type="entry name" value="glgA"/>
    <property type="match status" value="1"/>
</dbReference>
<dbReference type="NCBIfam" id="NF001898">
    <property type="entry name" value="PRK00654.1-1"/>
    <property type="match status" value="1"/>
</dbReference>
<dbReference type="PANTHER" id="PTHR45825:SF11">
    <property type="entry name" value="ALPHA AMYLASE DOMAIN-CONTAINING PROTEIN"/>
    <property type="match status" value="1"/>
</dbReference>
<dbReference type="PANTHER" id="PTHR45825">
    <property type="entry name" value="GRANULE-BOUND STARCH SYNTHASE 1, CHLOROPLASTIC/AMYLOPLASTIC"/>
    <property type="match status" value="1"/>
</dbReference>
<dbReference type="Pfam" id="PF08323">
    <property type="entry name" value="Glyco_transf_5"/>
    <property type="match status" value="1"/>
</dbReference>
<dbReference type="Pfam" id="PF00534">
    <property type="entry name" value="Glycos_transf_1"/>
    <property type="match status" value="1"/>
</dbReference>
<dbReference type="SUPFAM" id="SSF53756">
    <property type="entry name" value="UDP-Glycosyltransferase/glycogen phosphorylase"/>
    <property type="match status" value="1"/>
</dbReference>
<name>GLGA_STRE4</name>